<dbReference type="EC" id="3.6.1.1" evidence="1"/>
<dbReference type="EMBL" id="FM242711">
    <property type="protein sequence ID" value="CAS05220.1"/>
    <property type="molecule type" value="Genomic_DNA"/>
</dbReference>
<dbReference type="RefSeq" id="WP_003727434.1">
    <property type="nucleotide sequence ID" value="NC_012488.1"/>
</dbReference>
<dbReference type="SMR" id="C1KV95"/>
<dbReference type="KEGG" id="lmc:Lm4b_01458"/>
<dbReference type="HOGENOM" id="CLU_025243_0_1_9"/>
<dbReference type="GO" id="GO:0005737">
    <property type="term" value="C:cytoplasm"/>
    <property type="evidence" value="ECO:0007669"/>
    <property type="project" value="UniProtKB-SubCell"/>
</dbReference>
<dbReference type="GO" id="GO:0004427">
    <property type="term" value="F:inorganic diphosphate phosphatase activity"/>
    <property type="evidence" value="ECO:0007669"/>
    <property type="project" value="UniProtKB-UniRule"/>
</dbReference>
<dbReference type="GO" id="GO:0030145">
    <property type="term" value="F:manganese ion binding"/>
    <property type="evidence" value="ECO:0007669"/>
    <property type="project" value="UniProtKB-UniRule"/>
</dbReference>
<dbReference type="FunFam" id="3.10.310.20:FF:000001">
    <property type="entry name" value="Probable manganese-dependent inorganic pyrophosphatase"/>
    <property type="match status" value="1"/>
</dbReference>
<dbReference type="FunFam" id="3.90.1640.10:FF:000001">
    <property type="entry name" value="Probable manganese-dependent inorganic pyrophosphatase"/>
    <property type="match status" value="1"/>
</dbReference>
<dbReference type="Gene3D" id="3.10.310.20">
    <property type="entry name" value="DHHA2 domain"/>
    <property type="match status" value="1"/>
</dbReference>
<dbReference type="Gene3D" id="3.90.1640.10">
    <property type="entry name" value="inorganic pyrophosphatase (n-terminal core)"/>
    <property type="match status" value="1"/>
</dbReference>
<dbReference type="HAMAP" id="MF_00207">
    <property type="entry name" value="PPase_C"/>
    <property type="match status" value="1"/>
</dbReference>
<dbReference type="InterPro" id="IPR001667">
    <property type="entry name" value="DDH_dom"/>
</dbReference>
<dbReference type="InterPro" id="IPR038763">
    <property type="entry name" value="DHH_sf"/>
</dbReference>
<dbReference type="InterPro" id="IPR004097">
    <property type="entry name" value="DHHA2"/>
</dbReference>
<dbReference type="InterPro" id="IPR038222">
    <property type="entry name" value="DHHA2_dom_sf"/>
</dbReference>
<dbReference type="InterPro" id="IPR022934">
    <property type="entry name" value="Mn-dep_inorganic_PyrPase"/>
</dbReference>
<dbReference type="NCBIfam" id="NF003877">
    <property type="entry name" value="PRK05427.1"/>
    <property type="match status" value="1"/>
</dbReference>
<dbReference type="PANTHER" id="PTHR12112">
    <property type="entry name" value="BNIP - RELATED"/>
    <property type="match status" value="1"/>
</dbReference>
<dbReference type="PANTHER" id="PTHR12112:SF22">
    <property type="entry name" value="MANGANESE-DEPENDENT INORGANIC PYROPHOSPHATASE-RELATED"/>
    <property type="match status" value="1"/>
</dbReference>
<dbReference type="Pfam" id="PF01368">
    <property type="entry name" value="DHH"/>
    <property type="match status" value="1"/>
</dbReference>
<dbReference type="Pfam" id="PF02833">
    <property type="entry name" value="DHHA2"/>
    <property type="match status" value="1"/>
</dbReference>
<dbReference type="SMART" id="SM01131">
    <property type="entry name" value="DHHA2"/>
    <property type="match status" value="1"/>
</dbReference>
<dbReference type="SUPFAM" id="SSF64182">
    <property type="entry name" value="DHH phosphoesterases"/>
    <property type="match status" value="1"/>
</dbReference>
<protein>
    <recommendedName>
        <fullName evidence="1">Probable manganese-dependent inorganic pyrophosphatase</fullName>
        <ecNumber evidence="1">3.6.1.1</ecNumber>
    </recommendedName>
    <alternativeName>
        <fullName evidence="1">Pyrophosphate phospho-hydrolase</fullName>
        <shortName evidence="1">PPase</shortName>
    </alternativeName>
</protein>
<comment type="catalytic activity">
    <reaction evidence="1">
        <text>diphosphate + H2O = 2 phosphate + H(+)</text>
        <dbReference type="Rhea" id="RHEA:24576"/>
        <dbReference type="ChEBI" id="CHEBI:15377"/>
        <dbReference type="ChEBI" id="CHEBI:15378"/>
        <dbReference type="ChEBI" id="CHEBI:33019"/>
        <dbReference type="ChEBI" id="CHEBI:43474"/>
        <dbReference type="EC" id="3.6.1.1"/>
    </reaction>
</comment>
<comment type="cofactor">
    <cofactor evidence="1">
        <name>Mn(2+)</name>
        <dbReference type="ChEBI" id="CHEBI:29035"/>
    </cofactor>
    <text evidence="1">Binds 2 manganese ions per subunit.</text>
</comment>
<comment type="subcellular location">
    <subcellularLocation>
        <location evidence="1">Cytoplasm</location>
    </subcellularLocation>
</comment>
<comment type="similarity">
    <text evidence="1">Belongs to the PPase class C family.</text>
</comment>
<sequence>MTKTLVFGHKNPDTDTICSAISYAELKKAQGADIEAVRLGELNSETAFVLDYFQVTAPRLVQTVANEVSEVALVDHNERQQSVDDIDDVTVTAVVDHHRIANFETSDPLYYRAEPVGCTTTILLKMFRENEVEVSKTVAGLMLSAIISDTLLFQSPTCTEEDKVAAQKLAQIADVDIQSYGMEMLKAGADVSKKTVAELLLDAKEFNMNDNKVEIAQINVVDVNDVLSRRAEVEALMTQNIVDKGLDLYLFVITNILTNDSVGIAIGSKTAVVEEAYGVKFVENQAPLKGVVSRKKQVVPILTDTFAK</sequence>
<reference key="1">
    <citation type="journal article" date="2012" name="BMC Genomics">
        <title>Comparative genomics and transcriptomics of lineages I, II, and III strains of Listeria monocytogenes.</title>
        <authorList>
            <person name="Hain T."/>
            <person name="Ghai R."/>
            <person name="Billion A."/>
            <person name="Kuenne C.T."/>
            <person name="Steinweg C."/>
            <person name="Izar B."/>
            <person name="Mohamed W."/>
            <person name="Mraheil M."/>
            <person name="Domann E."/>
            <person name="Schaffrath S."/>
            <person name="Karst U."/>
            <person name="Goesmann A."/>
            <person name="Oehm S."/>
            <person name="Puhler A."/>
            <person name="Merkl R."/>
            <person name="Vorwerk S."/>
            <person name="Glaser P."/>
            <person name="Garrido P."/>
            <person name="Rusniok C."/>
            <person name="Buchrieser C."/>
            <person name="Goebel W."/>
            <person name="Chakraborty T."/>
        </authorList>
    </citation>
    <scope>NUCLEOTIDE SEQUENCE [LARGE SCALE GENOMIC DNA]</scope>
    <source>
        <strain>CLIP80459</strain>
    </source>
</reference>
<gene>
    <name evidence="1" type="primary">ppaC</name>
    <name type="ordered locus">Lm4b_01458</name>
</gene>
<proteinExistence type="inferred from homology"/>
<keyword id="KW-0963">Cytoplasm</keyword>
<keyword id="KW-0378">Hydrolase</keyword>
<keyword id="KW-0464">Manganese</keyword>
<keyword id="KW-0479">Metal-binding</keyword>
<organism>
    <name type="scientific">Listeria monocytogenes serotype 4b (strain CLIP80459)</name>
    <dbReference type="NCBI Taxonomy" id="568819"/>
    <lineage>
        <taxon>Bacteria</taxon>
        <taxon>Bacillati</taxon>
        <taxon>Bacillota</taxon>
        <taxon>Bacilli</taxon>
        <taxon>Bacillales</taxon>
        <taxon>Listeriaceae</taxon>
        <taxon>Listeria</taxon>
    </lineage>
</organism>
<evidence type="ECO:0000255" key="1">
    <source>
        <dbReference type="HAMAP-Rule" id="MF_00207"/>
    </source>
</evidence>
<accession>C1KV95</accession>
<feature type="chain" id="PRO_1000204161" description="Probable manganese-dependent inorganic pyrophosphatase">
    <location>
        <begin position="1"/>
        <end position="308"/>
    </location>
</feature>
<feature type="binding site" evidence="1">
    <location>
        <position position="9"/>
    </location>
    <ligand>
        <name>Mn(2+)</name>
        <dbReference type="ChEBI" id="CHEBI:29035"/>
        <label>1</label>
    </ligand>
</feature>
<feature type="binding site" evidence="1">
    <location>
        <position position="13"/>
    </location>
    <ligand>
        <name>Mn(2+)</name>
        <dbReference type="ChEBI" id="CHEBI:29035"/>
        <label>1</label>
    </ligand>
</feature>
<feature type="binding site" evidence="1">
    <location>
        <position position="15"/>
    </location>
    <ligand>
        <name>Mn(2+)</name>
        <dbReference type="ChEBI" id="CHEBI:29035"/>
        <label>2</label>
    </ligand>
</feature>
<feature type="binding site" evidence="1">
    <location>
        <position position="75"/>
    </location>
    <ligand>
        <name>Mn(2+)</name>
        <dbReference type="ChEBI" id="CHEBI:29035"/>
        <label>1</label>
    </ligand>
</feature>
<feature type="binding site" evidence="1">
    <location>
        <position position="75"/>
    </location>
    <ligand>
        <name>Mn(2+)</name>
        <dbReference type="ChEBI" id="CHEBI:29035"/>
        <label>2</label>
    </ligand>
</feature>
<feature type="binding site" evidence="1">
    <location>
        <position position="97"/>
    </location>
    <ligand>
        <name>Mn(2+)</name>
        <dbReference type="ChEBI" id="CHEBI:29035"/>
        <label>2</label>
    </ligand>
</feature>
<feature type="binding site" evidence="1">
    <location>
        <position position="149"/>
    </location>
    <ligand>
        <name>Mn(2+)</name>
        <dbReference type="ChEBI" id="CHEBI:29035"/>
        <label>2</label>
    </ligand>
</feature>
<name>PPAC_LISMC</name>